<sequence length="450" mass="50705">MESDKIAFKINNQLVSVKPEVIVDQYEYKYPAIKDQRKPSITLGKAPDLNKAYKSILSGMNAAKLDPDDVCSYLAAAMELFEGICPEDWTSYGILIARKGDKITPATLVDIRRTDIQGSWALAGGQDFTRDPTIAEHASLVGLLLSLYRLSKISGQNTGNYKTNIADRIEQIFETAPFAKIVEHHTLMTTHKMCANWSTIPNFRFLAGTYDMFFSRVEHLYSAIRVGTVVTAYEDCSGLVSFTGFIKQINLTAREAILYFFHKNFEEEIRRMFEPGQETAVPHSYFIHFRSLGLSGKSPYSSNAVGHVFNLIHFVGCYMGQIRSLNATVISTCAPHEMSVLGGYLGEEFFGKGTFERRFFRDEKELQDYEAAEAMKIDLALADDGTVNSYDEDYLSGETRSPEAVYTRIMMNGGRLKKSHIRRYISVSSNHQSRPNSFAEFLNKTYSSDS</sequence>
<protein>
    <recommendedName>
        <fullName>Nucleoprotein</fullName>
        <shortName>NP</shortName>
    </recommendedName>
    <alternativeName>
        <fullName>Nucleocapsid protein</fullName>
        <shortName>Protein N</shortName>
    </alternativeName>
</protein>
<reference key="1">
    <citation type="journal article" date="2002" name="Virus Res.">
        <title>Characterisation of an Australian bat lyssavirus variant isolated from an insectivorous bat.</title>
        <authorList>
            <person name="Gould A.R."/>
            <person name="Kattenbelt J.A."/>
            <person name="Gumley S.G."/>
            <person name="Lunt R.A."/>
        </authorList>
    </citation>
    <scope>NUCLEOTIDE SEQUENCE [GENOMIC RNA]</scope>
</reference>
<accession>Q9QSP4</accession>
<comment type="function">
    <text evidence="1">Encapsidates the genome in a ratio of one protein N per nine ribonucleotides, protecting it from nucleases. If expressed without protein P it binds non-specifically RNA and therefore can bind it's own mRNA. Interaction with protein P abolishes any non-specific RNA binding, and prevents phosphorylation. The soluble N-P complex encapsidates specifically the genomic RNA, with protein N protecting the genome like a pearl necklace. The encapsidated genomic RNA is termed the nucleocapsid (NC) and serves as template for viral transcription and replication. Protein N binds protein P in the NC through a different interaction, and can be phosphorylated. Subsequent viral replication is dependent on intracellular concentration of newly synthesized protein N. During replication, encapsidation by protein N is coupled to RNA synthesis and all replicative products are resistant to nucleases (By similarity).</text>
</comment>
<comment type="subunit">
    <text evidence="1">Homomultimerizes to form the nucleocapsid. Binds to viral genomic RNA. In nucleocapsid, binds protein P and thereby positions the polymerase on the template. Protein P acts as a chaperone on free protein N to prevent it from aggregation before encapsidating genomic RNA (By similarity).</text>
</comment>
<comment type="subcellular location">
    <subcellularLocation>
        <location>Virion</location>
    </subcellularLocation>
    <subcellularLocation>
        <location evidence="1">Host cytoplasm</location>
    </subcellularLocation>
</comment>
<comment type="PTM">
    <text evidence="1">Phosphorylated by host CK2. Unphosphorylated protein N seems to have a better affinity for leader viral promoter encapsidation. Phosphorylation of protein N in ribonucleocapsid may stabilize the interaction with protein P, thereby playing an important role in viral transcription/replication (By similarity).</text>
</comment>
<comment type="miscellaneous">
    <text evidence="1">Displays a superantigen activity in human and mouse, activating mostly V-beta-8 subtypes of T-cell receptor.</text>
</comment>
<comment type="similarity">
    <text evidence="2">Belongs to the lyssavirus nucleocapsid protein family.</text>
</comment>
<name>NCAP_ABLVB</name>
<feature type="chain" id="PRO_0000295200" description="Nucleoprotein">
    <location>
        <begin position="1"/>
        <end position="450"/>
    </location>
</feature>
<feature type="modified residue" description="Phosphoserine; by host CK2" evidence="1">
    <location>
        <position position="389"/>
    </location>
</feature>
<keyword id="KW-0167">Capsid protein</keyword>
<keyword id="KW-1139">Helical capsid protein</keyword>
<keyword id="KW-1035">Host cytoplasm</keyword>
<keyword id="KW-0597">Phosphoprotein</keyword>
<keyword id="KW-1185">Reference proteome</keyword>
<keyword id="KW-0687">Ribonucleoprotein</keyword>
<keyword id="KW-0694">RNA-binding</keyword>
<keyword id="KW-0766">Superantigen</keyword>
<keyword id="KW-0543">Viral nucleoprotein</keyword>
<keyword id="KW-0946">Virion</keyword>
<organismHost>
    <name type="scientific">Homo sapiens</name>
    <name type="common">Human</name>
    <dbReference type="NCBI Taxonomy" id="9606"/>
</organismHost>
<organismHost>
    <name type="scientific">Pteropus alecto</name>
    <name type="common">Black flying fox</name>
    <dbReference type="NCBI Taxonomy" id="9402"/>
</organismHost>
<organismHost>
    <name type="scientific">Pteropus conspicillatus</name>
    <name type="common">Spectacled flying fox</name>
    <dbReference type="NCBI Taxonomy" id="328804"/>
</organismHost>
<organismHost>
    <name type="scientific">Pteropus poliocephalus</name>
    <name type="common">Grey-headed flying fox</name>
    <dbReference type="NCBI Taxonomy" id="9403"/>
</organismHost>
<organismHost>
    <name type="scientific">Pteropus scapulatus</name>
    <name type="common">Little red flying fox</name>
    <dbReference type="NCBI Taxonomy" id="94117"/>
</organismHost>
<organismHost>
    <name type="scientific">Saccolaimus</name>
    <dbReference type="NCBI Taxonomy" id="446909"/>
</organismHost>
<organism>
    <name type="scientific">Australian bat lyssavirus (isolate Bat/AUS/1996)</name>
    <name type="common">ABLV</name>
    <dbReference type="NCBI Taxonomy" id="446561"/>
    <lineage>
        <taxon>Viruses</taxon>
        <taxon>Riboviria</taxon>
        <taxon>Orthornavirae</taxon>
        <taxon>Negarnaviricota</taxon>
        <taxon>Haploviricotina</taxon>
        <taxon>Monjiviricetes</taxon>
        <taxon>Mononegavirales</taxon>
        <taxon>Rhabdoviridae</taxon>
        <taxon>Alpharhabdovirinae</taxon>
        <taxon>Lyssavirus</taxon>
        <taxon>Lyssavirus australis</taxon>
    </lineage>
</organism>
<gene>
    <name type="primary">N</name>
</gene>
<evidence type="ECO:0000250" key="1"/>
<evidence type="ECO:0000305" key="2"/>
<proteinExistence type="inferred from homology"/>
<dbReference type="EMBL" id="AF081020">
    <property type="protein sequence ID" value="AAD47896.1"/>
    <property type="molecule type" value="Genomic_RNA"/>
</dbReference>
<dbReference type="RefSeq" id="NP_478339.1">
    <property type="nucleotide sequence ID" value="NC_003243.1"/>
</dbReference>
<dbReference type="SMR" id="Q9QSP4"/>
<dbReference type="GeneID" id="926728"/>
<dbReference type="KEGG" id="vg:926728"/>
<dbReference type="Proteomes" id="UP000006934">
    <property type="component" value="Segment"/>
</dbReference>
<dbReference type="GO" id="GO:0019029">
    <property type="term" value="C:helical viral capsid"/>
    <property type="evidence" value="ECO:0007669"/>
    <property type="project" value="UniProtKB-KW"/>
</dbReference>
<dbReference type="GO" id="GO:0030430">
    <property type="term" value="C:host cell cytoplasm"/>
    <property type="evidence" value="ECO:0007669"/>
    <property type="project" value="UniProtKB-SubCell"/>
</dbReference>
<dbReference type="GO" id="GO:1990904">
    <property type="term" value="C:ribonucleoprotein complex"/>
    <property type="evidence" value="ECO:0007669"/>
    <property type="project" value="UniProtKB-KW"/>
</dbReference>
<dbReference type="GO" id="GO:0019013">
    <property type="term" value="C:viral nucleocapsid"/>
    <property type="evidence" value="ECO:0007669"/>
    <property type="project" value="UniProtKB-KW"/>
</dbReference>
<dbReference type="GO" id="GO:0003723">
    <property type="term" value="F:RNA binding"/>
    <property type="evidence" value="ECO:0007669"/>
    <property type="project" value="UniProtKB-KW"/>
</dbReference>
<dbReference type="Gene3D" id="1.10.3610.10">
    <property type="entry name" value="Nucleoprotein"/>
    <property type="match status" value="1"/>
</dbReference>
<dbReference type="Gene3D" id="1.10.3570.10">
    <property type="entry name" value="Rhabdovirus nucleocapsid protein like domain"/>
    <property type="match status" value="1"/>
</dbReference>
<dbReference type="InterPro" id="IPR000448">
    <property type="entry name" value="Rhabdo_ncapsid"/>
</dbReference>
<dbReference type="InterPro" id="IPR023331">
    <property type="entry name" value="Rhabdovirus_ncapsid_C"/>
</dbReference>
<dbReference type="InterPro" id="IPR023330">
    <property type="entry name" value="Rhabdovirus_ncapsid_N"/>
</dbReference>
<dbReference type="InterPro" id="IPR035961">
    <property type="entry name" value="Rhabdovirus_nucleoprotein-like"/>
</dbReference>
<dbReference type="Pfam" id="PF00945">
    <property type="entry name" value="Rhabdo_ncap"/>
    <property type="match status" value="1"/>
</dbReference>
<dbReference type="SUPFAM" id="SSF140809">
    <property type="entry name" value="Rhabdovirus nucleoprotein-like"/>
    <property type="match status" value="1"/>
</dbReference>